<feature type="signal peptide" evidence="2">
    <location>
        <begin position="1"/>
        <end position="24"/>
    </location>
</feature>
<feature type="propeptide" id="PRO_0000289875" evidence="1">
    <location>
        <begin position="25"/>
        <end position="54"/>
    </location>
</feature>
<feature type="peptide" id="PRO_0000289876" description="Conotoxin Qc3.1">
    <location>
        <begin position="55"/>
        <end position="71"/>
    </location>
</feature>
<feature type="disulfide bond" evidence="1">
    <location>
        <begin position="56"/>
        <end position="66"/>
    </location>
</feature>
<feature type="disulfide bond" evidence="1">
    <location>
        <begin position="57"/>
        <end position="70"/>
    </location>
</feature>
<feature type="disulfide bond" evidence="1">
    <location>
        <begin position="62"/>
        <end position="71"/>
    </location>
</feature>
<sequence>MLKMGVVLFTFLVLFPLATLQLDADQPAARYAENKQDLNPNERKEMMLSALRQRACCDPDWCDAGCYDGCC</sequence>
<proteinExistence type="evidence at transcript level"/>
<comment type="subcellular location">
    <subcellularLocation>
        <location evidence="1">Secreted</location>
    </subcellularLocation>
</comment>
<comment type="tissue specificity">
    <text>Expressed by the venom duct.</text>
</comment>
<comment type="domain">
    <text>The cysteine framework is III (CC-C-C-CC). Classified in the M-3 branch, since 3 residues stand between the fourth and the fifth cysteine residues.</text>
</comment>
<comment type="similarity">
    <text evidence="3">Belongs to the conotoxin M superfamily.</text>
</comment>
<name>CM31_CONQU</name>
<organism>
    <name type="scientific">Conus quercinus</name>
    <name type="common">Oak cone</name>
    <dbReference type="NCBI Taxonomy" id="101313"/>
    <lineage>
        <taxon>Eukaryota</taxon>
        <taxon>Metazoa</taxon>
        <taxon>Spiralia</taxon>
        <taxon>Lophotrochozoa</taxon>
        <taxon>Mollusca</taxon>
        <taxon>Gastropoda</taxon>
        <taxon>Caenogastropoda</taxon>
        <taxon>Neogastropoda</taxon>
        <taxon>Conoidea</taxon>
        <taxon>Conidae</taxon>
        <taxon>Conus</taxon>
        <taxon>Lividoconus</taxon>
    </lineage>
</organism>
<dbReference type="EMBL" id="AY880685">
    <property type="protein sequence ID" value="AAW78562.1"/>
    <property type="molecule type" value="mRNA"/>
</dbReference>
<dbReference type="SMR" id="Q5EHP1"/>
<dbReference type="ConoServer" id="1083">
    <property type="toxin name" value="Qc3.1 precursor"/>
</dbReference>
<dbReference type="GO" id="GO:0005576">
    <property type="term" value="C:extracellular region"/>
    <property type="evidence" value="ECO:0007669"/>
    <property type="project" value="UniProtKB-SubCell"/>
</dbReference>
<dbReference type="GO" id="GO:0008200">
    <property type="term" value="F:ion channel inhibitor activity"/>
    <property type="evidence" value="ECO:0007669"/>
    <property type="project" value="InterPro"/>
</dbReference>
<dbReference type="GO" id="GO:0090729">
    <property type="term" value="F:toxin activity"/>
    <property type="evidence" value="ECO:0007669"/>
    <property type="project" value="UniProtKB-KW"/>
</dbReference>
<dbReference type="InterPro" id="IPR004214">
    <property type="entry name" value="Conotoxin"/>
</dbReference>
<dbReference type="Pfam" id="PF02950">
    <property type="entry name" value="Conotoxin"/>
    <property type="match status" value="1"/>
</dbReference>
<evidence type="ECO:0000250" key="1"/>
<evidence type="ECO:0000255" key="2"/>
<evidence type="ECO:0000305" key="3"/>
<accession>Q5EHP1</accession>
<keyword id="KW-1015">Disulfide bond</keyword>
<keyword id="KW-0964">Secreted</keyword>
<keyword id="KW-0732">Signal</keyword>
<keyword id="KW-0800">Toxin</keyword>
<reference key="1">
    <citation type="journal article" date="2006" name="FEBS J.">
        <title>Characterization of novel M-superfamily conotoxins with new disulfide linkage.</title>
        <authorList>
            <person name="Han Y.-H."/>
            <person name="Wang Q."/>
            <person name="Jiang H."/>
            <person name="Liu L."/>
            <person name="Xiao C."/>
            <person name="Yuan D.-D."/>
            <person name="Shao X.-X."/>
            <person name="Dai Q.-Y."/>
            <person name="Cheng J.-S."/>
            <person name="Chi C.-W."/>
        </authorList>
    </citation>
    <scope>NUCLEOTIDE SEQUENCE [MRNA]</scope>
    <source>
        <tissue>Venom duct</tissue>
    </source>
</reference>
<protein>
    <recommendedName>
        <fullName>Conotoxin Qc3.1</fullName>
    </recommendedName>
</protein>